<accession>P13976</accession>
<dbReference type="EC" id="3.1.-.-"/>
<dbReference type="EMBL" id="M26840">
    <property type="protein sequence ID" value="AAA26070.1"/>
    <property type="molecule type" value="Genomic_DNA"/>
</dbReference>
<dbReference type="EMBL" id="X06240">
    <property type="protein sequence ID" value="CAA29585.1"/>
    <property type="molecule type" value="Genomic_DNA"/>
</dbReference>
<dbReference type="PIR" id="I64784">
    <property type="entry name" value="I64784"/>
</dbReference>
<dbReference type="RefSeq" id="NP_862963.1">
    <property type="nucleotide sequence ID" value="NC_004998.1"/>
</dbReference>
<dbReference type="RefSeq" id="NP_957647.1">
    <property type="nucleotide sequence ID" value="NC_005327.1"/>
</dbReference>
<dbReference type="RefSeq" id="WP_001398199.1">
    <property type="nucleotide sequence ID" value="NZ_WSXO01000133.1"/>
</dbReference>
<dbReference type="RefSeq" id="YP_001816577.1">
    <property type="nucleotide sequence ID" value="NC_010558.1"/>
</dbReference>
<dbReference type="RefSeq" id="YP_003108265.1">
    <property type="nucleotide sequence ID" value="NC_013121.1"/>
</dbReference>
<dbReference type="RefSeq" id="YP_006954227.1">
    <property type="nucleotide sequence ID" value="NC_019095.1"/>
</dbReference>
<dbReference type="PDB" id="1M1F">
    <property type="method" value="X-ray"/>
    <property type="resolution" value="1.40 A"/>
    <property type="chains" value="A/B=24-133"/>
</dbReference>
<dbReference type="PDB" id="2C06">
    <property type="method" value="NMR"/>
    <property type="chains" value="A/B=24-133"/>
</dbReference>
<dbReference type="PDBsum" id="1M1F"/>
<dbReference type="PDBsum" id="2C06"/>
<dbReference type="BMRB" id="P13976"/>
<dbReference type="SMR" id="P13976"/>
<dbReference type="OrthoDB" id="9808744at2"/>
<dbReference type="EvolutionaryTrace" id="P13976"/>
<dbReference type="GO" id="GO:0003677">
    <property type="term" value="F:DNA binding"/>
    <property type="evidence" value="ECO:0007669"/>
    <property type="project" value="UniProtKB-KW"/>
</dbReference>
<dbReference type="GO" id="GO:0003723">
    <property type="term" value="F:RNA binding"/>
    <property type="evidence" value="ECO:0007669"/>
    <property type="project" value="UniProtKB-KW"/>
</dbReference>
<dbReference type="GO" id="GO:0004521">
    <property type="term" value="F:RNA endonuclease activity"/>
    <property type="evidence" value="ECO:0007669"/>
    <property type="project" value="TreeGrafter"/>
</dbReference>
<dbReference type="GO" id="GO:0006402">
    <property type="term" value="P:mRNA catabolic process"/>
    <property type="evidence" value="ECO:0007669"/>
    <property type="project" value="TreeGrafter"/>
</dbReference>
<dbReference type="GO" id="GO:0016075">
    <property type="term" value="P:rRNA catabolic process"/>
    <property type="evidence" value="ECO:0007669"/>
    <property type="project" value="TreeGrafter"/>
</dbReference>
<dbReference type="Gene3D" id="2.30.30.110">
    <property type="match status" value="1"/>
</dbReference>
<dbReference type="InterPro" id="IPR003477">
    <property type="entry name" value="PemK-like"/>
</dbReference>
<dbReference type="InterPro" id="IPR011067">
    <property type="entry name" value="Plasmid_toxin/cell-grow_inhib"/>
</dbReference>
<dbReference type="PANTHER" id="PTHR33988">
    <property type="entry name" value="ENDORIBONUCLEASE MAZF-RELATED"/>
    <property type="match status" value="1"/>
</dbReference>
<dbReference type="PANTHER" id="PTHR33988:SF3">
    <property type="entry name" value="ENDORIBONUCLEASE TOXIN CHPB-RELATED"/>
    <property type="match status" value="1"/>
</dbReference>
<dbReference type="Pfam" id="PF02452">
    <property type="entry name" value="PemK_toxin"/>
    <property type="match status" value="1"/>
</dbReference>
<dbReference type="PIRSF" id="PIRSF033490">
    <property type="entry name" value="MazF"/>
    <property type="match status" value="1"/>
</dbReference>
<dbReference type="SUPFAM" id="SSF50118">
    <property type="entry name" value="Cell growth inhibitor/plasmid maintenance toxic component"/>
    <property type="match status" value="1"/>
</dbReference>
<reference key="1">
    <citation type="journal article" date="1986" name="Adv. Biophys.">
        <title>DNA replication of the resistance plasmid R100 and its control.</title>
        <authorList>
            <person name="Ohtsubo H."/>
            <person name="Ryder T.B."/>
            <person name="Maeda Y."/>
            <person name="Armstrong K."/>
            <person name="Ohtsubo E."/>
        </authorList>
    </citation>
    <scope>NUCLEOTIDE SEQUENCE [GENOMIC DNA]</scope>
    <source>
        <plasmid>IncFII R100 (NR1)</plasmid>
    </source>
</reference>
<reference key="2">
    <citation type="journal article" date="1987" name="Mol. Gen. Genet.">
        <title>Identification of components of a new stability system of plasmid R1, ParD, that is close to the origin of replication of this plasmid.</title>
        <authorList>
            <person name="Bravo A."/>
            <person name="de Torrontegui G."/>
            <person name="Diaz R."/>
        </authorList>
    </citation>
    <scope>NUCLEOTIDE SEQUENCE [GENOMIC DNA]</scope>
    <source>
        <plasmid>IncFII R1</plasmid>
    </source>
</reference>
<reference key="3">
    <citation type="journal article" date="1988" name="J. Bacteriol.">
        <title>Two genes, pemK and pemI, responsible for stable maintenance of resistance plasmid R100.</title>
        <authorList>
            <person name="Tsuchimoto S."/>
            <person name="Ohtsubo H."/>
            <person name="Ohtsubo E."/>
        </authorList>
    </citation>
    <scope>FUNCTION</scope>
</reference>
<reference key="4">
    <citation type="journal article" date="1993" name="Mol. Gen. Genet.">
        <title>Autoregulation by cooperative binding of the PemI and PemK proteins to the promoter region of the pem operon.</title>
        <authorList>
            <person name="Tsuchimoto S."/>
            <person name="Ohtsubo E."/>
        </authorList>
    </citation>
    <scope>FUNCTION</scope>
    <scope>DNA-BINDING</scope>
</reference>
<reference key="5">
    <citation type="journal article" date="2002" name="Structure">
        <title>Structural and functional analysis of the kid toxin protein from E. coli plasmid R1.</title>
        <authorList>
            <person name="Hargreaves D."/>
            <person name="Santos-Sierra S."/>
            <person name="Giraldo R."/>
            <person name="Sabariegos-Jareno R."/>
            <person name="de la Cueva-Mendez G."/>
            <person name="Boelens R."/>
            <person name="Diaz-Orejas R."/>
            <person name="Rafferty J.B."/>
        </authorList>
    </citation>
    <scope>X-RAY CRYSTALLOGRAPHY (1.4 ANGSTROMS) OF 24-133</scope>
    <scope>SUBUNIT</scope>
    <source>
        <plasmid>IncFII R1</plasmid>
    </source>
</reference>
<evidence type="ECO:0000269" key="1">
    <source>
    </source>
</evidence>
<evidence type="ECO:0000269" key="2">
    <source>
    </source>
</evidence>
<evidence type="ECO:0000269" key="3">
    <source>
    </source>
</evidence>
<evidence type="ECO:0000305" key="4"/>
<evidence type="ECO:0007829" key="5">
    <source>
        <dbReference type="PDB" id="1M1F"/>
    </source>
</evidence>
<evidence type="ECO:0007829" key="6">
    <source>
        <dbReference type="PDB" id="2C06"/>
    </source>
</evidence>
<feature type="chain" id="PRO_0000201901" description="Endoribonuclease PemK">
    <location>
        <begin position="1"/>
        <end position="133"/>
    </location>
</feature>
<feature type="strand" evidence="5">
    <location>
        <begin position="28"/>
        <end position="33"/>
    </location>
</feature>
<feature type="strand" evidence="5">
    <location>
        <begin position="44"/>
        <end position="50"/>
    </location>
</feature>
<feature type="helix" evidence="5">
    <location>
        <begin position="54"/>
        <end position="60"/>
    </location>
</feature>
<feature type="strand" evidence="5">
    <location>
        <begin position="64"/>
        <end position="69"/>
    </location>
</feature>
<feature type="strand" evidence="6">
    <location>
        <begin position="72"/>
        <end position="76"/>
    </location>
</feature>
<feature type="strand" evidence="5">
    <location>
        <begin position="81"/>
        <end position="83"/>
    </location>
</feature>
<feature type="strand" evidence="5">
    <location>
        <begin position="93"/>
        <end position="96"/>
    </location>
</feature>
<feature type="helix" evidence="5">
    <location>
        <begin position="105"/>
        <end position="108"/>
    </location>
</feature>
<feature type="strand" evidence="5">
    <location>
        <begin position="111"/>
        <end position="115"/>
    </location>
</feature>
<feature type="helix" evidence="5">
    <location>
        <begin position="118"/>
        <end position="129"/>
    </location>
</feature>
<protein>
    <recommendedName>
        <fullName>Endoribonuclease PemK</fullName>
        <ecNumber>3.1.-.-</ecNumber>
    </recommendedName>
    <alternativeName>
        <fullName>Kid toxin protein</fullName>
    </alternativeName>
    <alternativeName>
        <fullName>mRNA interferase PemK</fullName>
    </alternativeName>
</protein>
<geneLocation type="plasmid">
    <name>IncFII R100</name>
    <name>NR1</name>
</geneLocation>
<geneLocation type="plasmid">
    <name>IncFII R1</name>
</geneLocation>
<comment type="function">
    <text evidence="2 3">Toxic component of a type II toxin-antitoxin (TA) system. Probably functions as an endoribonuclease. Responsible for the stable maintenance of the plasmid during cell division by postsegregational killing of plasmid-less daughter cells. Neutralized by coexpression with cognate antitoxin PemI. Both PemI and PemK proteins bind to the promoter region of the pem operon to autoregulate their synthesis.</text>
</comment>
<comment type="subunit">
    <text evidence="1">Homodimer.</text>
</comment>
<comment type="similarity">
    <text evidence="4">Belongs to the PemK/MazF family.</text>
</comment>
<organism>
    <name type="scientific">Escherichia coli</name>
    <dbReference type="NCBI Taxonomy" id="562"/>
    <lineage>
        <taxon>Bacteria</taxon>
        <taxon>Pseudomonadati</taxon>
        <taxon>Pseudomonadota</taxon>
        <taxon>Gammaproteobacteria</taxon>
        <taxon>Enterobacterales</taxon>
        <taxon>Enterobacteriaceae</taxon>
        <taxon>Escherichia</taxon>
    </lineage>
</organism>
<proteinExistence type="evidence at protein level"/>
<sequence>MLKYQLKNENGWMHRRLVRRKSDMERGEIWLVSLDPTAGHEQQGTRPVLIVTPAAFNRVTRLPVVVPVTSGGNFARTAGFAVSLDGVGIRTTGVVRCDQPRTIDMKARGGKRLERVPETIMNEVLGRLSTILT</sequence>
<keyword id="KW-0002">3D-structure</keyword>
<keyword id="KW-0238">DNA-binding</keyword>
<keyword id="KW-0255">Endonuclease</keyword>
<keyword id="KW-0378">Hydrolase</keyword>
<keyword id="KW-0540">Nuclease</keyword>
<keyword id="KW-0614">Plasmid</keyword>
<keyword id="KW-0694">RNA-binding</keyword>
<keyword id="KW-1277">Toxin-antitoxin system</keyword>
<name>PEMK_ECOLX</name>
<gene>
    <name type="primary">pemK</name>
</gene>